<name>PYRB_METM7</name>
<accession>A6VHS2</accession>
<gene>
    <name evidence="1" type="primary">pyrB</name>
    <name type="ordered locus">MmarC7_0931</name>
</gene>
<reference key="1">
    <citation type="submission" date="2007-06" db="EMBL/GenBank/DDBJ databases">
        <title>Complete sequence of Methanococcus maripaludis C7.</title>
        <authorList>
            <consortium name="US DOE Joint Genome Institute"/>
            <person name="Copeland A."/>
            <person name="Lucas S."/>
            <person name="Lapidus A."/>
            <person name="Barry K."/>
            <person name="Glavina del Rio T."/>
            <person name="Dalin E."/>
            <person name="Tice H."/>
            <person name="Pitluck S."/>
            <person name="Clum A."/>
            <person name="Schmutz J."/>
            <person name="Larimer F."/>
            <person name="Land M."/>
            <person name="Hauser L."/>
            <person name="Kyrpides N."/>
            <person name="Anderson I."/>
            <person name="Sieprawska-Lupa M."/>
            <person name="Whitman W.B."/>
            <person name="Richardson P."/>
        </authorList>
    </citation>
    <scope>NUCLEOTIDE SEQUENCE [LARGE SCALE GENOMIC DNA]</scope>
    <source>
        <strain>C7 / ATCC BAA-1331</strain>
    </source>
</reference>
<protein>
    <recommendedName>
        <fullName evidence="1">Aspartate carbamoyltransferase catalytic subunit</fullName>
        <ecNumber evidence="1">2.1.3.2</ecNumber>
    </recommendedName>
    <alternativeName>
        <fullName evidence="1">Aspartate transcarbamylase</fullName>
        <shortName evidence="1">ATCase</shortName>
    </alternativeName>
</protein>
<keyword id="KW-0665">Pyrimidine biosynthesis</keyword>
<keyword id="KW-0808">Transferase</keyword>
<feature type="chain" id="PRO_1000000015" description="Aspartate carbamoyltransferase catalytic subunit">
    <location>
        <begin position="1"/>
        <end position="302"/>
    </location>
</feature>
<feature type="binding site" evidence="1">
    <location>
        <position position="53"/>
    </location>
    <ligand>
        <name>carbamoyl phosphate</name>
        <dbReference type="ChEBI" id="CHEBI:58228"/>
    </ligand>
</feature>
<feature type="binding site" evidence="1">
    <location>
        <position position="54"/>
    </location>
    <ligand>
        <name>carbamoyl phosphate</name>
        <dbReference type="ChEBI" id="CHEBI:58228"/>
    </ligand>
</feature>
<feature type="binding site" evidence="1">
    <location>
        <position position="82"/>
    </location>
    <ligand>
        <name>L-aspartate</name>
        <dbReference type="ChEBI" id="CHEBI:29991"/>
    </ligand>
</feature>
<feature type="binding site" evidence="1">
    <location>
        <position position="103"/>
    </location>
    <ligand>
        <name>carbamoyl phosphate</name>
        <dbReference type="ChEBI" id="CHEBI:58228"/>
    </ligand>
</feature>
<feature type="binding site" evidence="1">
    <location>
        <position position="131"/>
    </location>
    <ligand>
        <name>carbamoyl phosphate</name>
        <dbReference type="ChEBI" id="CHEBI:58228"/>
    </ligand>
</feature>
<feature type="binding site" evidence="1">
    <location>
        <position position="134"/>
    </location>
    <ligand>
        <name>carbamoyl phosphate</name>
        <dbReference type="ChEBI" id="CHEBI:58228"/>
    </ligand>
</feature>
<feature type="binding site" evidence="1">
    <location>
        <position position="164"/>
    </location>
    <ligand>
        <name>L-aspartate</name>
        <dbReference type="ChEBI" id="CHEBI:29991"/>
    </ligand>
</feature>
<feature type="binding site" evidence="1">
    <location>
        <position position="223"/>
    </location>
    <ligand>
        <name>L-aspartate</name>
        <dbReference type="ChEBI" id="CHEBI:29991"/>
    </ligand>
</feature>
<feature type="binding site" evidence="1">
    <location>
        <position position="260"/>
    </location>
    <ligand>
        <name>carbamoyl phosphate</name>
        <dbReference type="ChEBI" id="CHEBI:58228"/>
    </ligand>
</feature>
<feature type="binding site" evidence="1">
    <location>
        <position position="261"/>
    </location>
    <ligand>
        <name>carbamoyl phosphate</name>
        <dbReference type="ChEBI" id="CHEBI:58228"/>
    </ligand>
</feature>
<proteinExistence type="inferred from homology"/>
<sequence>MRHLISMRDIGREEILNILNESEKMEAILNENGHCDFLNGRILATLFYEPSTRTRLSFETAMKRLGGNVIGFTDISNTSVTKGESLADTIKVISGYSDLIAIRHPSEGAARLSSENSKVPVINAGDGSNQHPTQTLLDLYTIKREVGHIENLKIAFIGDLKYGRTVHSLCQALSLFKSVEIKLIAPDELKMPREVIEDIDGKLKLSEMTDVEIDDVDVVYMTRIQKERFVDVNEYYKVKGIYRLSKEHIGNKNVVIMHPLPRVDEIDSEVDNIPQARYFKQSFYGVPVRMAILKLLFEDSIK</sequence>
<organism>
    <name type="scientific">Methanococcus maripaludis (strain C7 / ATCC BAA-1331)</name>
    <dbReference type="NCBI Taxonomy" id="426368"/>
    <lineage>
        <taxon>Archaea</taxon>
        <taxon>Methanobacteriati</taxon>
        <taxon>Methanobacteriota</taxon>
        <taxon>Methanomada group</taxon>
        <taxon>Methanococci</taxon>
        <taxon>Methanococcales</taxon>
        <taxon>Methanococcaceae</taxon>
        <taxon>Methanococcus</taxon>
    </lineage>
</organism>
<comment type="function">
    <text evidence="1">Catalyzes the condensation of carbamoyl phosphate and aspartate to form carbamoyl aspartate and inorganic phosphate, the committed step in the de novo pyrimidine nucleotide biosynthesis pathway.</text>
</comment>
<comment type="catalytic activity">
    <reaction evidence="1">
        <text>carbamoyl phosphate + L-aspartate = N-carbamoyl-L-aspartate + phosphate + H(+)</text>
        <dbReference type="Rhea" id="RHEA:20013"/>
        <dbReference type="ChEBI" id="CHEBI:15378"/>
        <dbReference type="ChEBI" id="CHEBI:29991"/>
        <dbReference type="ChEBI" id="CHEBI:32814"/>
        <dbReference type="ChEBI" id="CHEBI:43474"/>
        <dbReference type="ChEBI" id="CHEBI:58228"/>
        <dbReference type="EC" id="2.1.3.2"/>
    </reaction>
</comment>
<comment type="pathway">
    <text evidence="1">Pyrimidine metabolism; UMP biosynthesis via de novo pathway; (S)-dihydroorotate from bicarbonate: step 2/3.</text>
</comment>
<comment type="subunit">
    <text evidence="1">Heterooligomer of catalytic and regulatory chains.</text>
</comment>
<comment type="similarity">
    <text evidence="1">Belongs to the aspartate/ornithine carbamoyltransferase superfamily. ATCase family.</text>
</comment>
<evidence type="ECO:0000255" key="1">
    <source>
        <dbReference type="HAMAP-Rule" id="MF_00001"/>
    </source>
</evidence>
<dbReference type="EC" id="2.1.3.2" evidence="1"/>
<dbReference type="EMBL" id="CP000745">
    <property type="protein sequence ID" value="ABR65998.1"/>
    <property type="molecule type" value="Genomic_DNA"/>
</dbReference>
<dbReference type="SMR" id="A6VHS2"/>
<dbReference type="STRING" id="426368.MmarC7_0931"/>
<dbReference type="KEGG" id="mmz:MmarC7_0931"/>
<dbReference type="eggNOG" id="arCOG00911">
    <property type="taxonomic scope" value="Archaea"/>
</dbReference>
<dbReference type="HOGENOM" id="CLU_043846_1_2_2"/>
<dbReference type="OrthoDB" id="7792at2157"/>
<dbReference type="UniPathway" id="UPA00070">
    <property type="reaction ID" value="UER00116"/>
</dbReference>
<dbReference type="GO" id="GO:0005829">
    <property type="term" value="C:cytosol"/>
    <property type="evidence" value="ECO:0007669"/>
    <property type="project" value="TreeGrafter"/>
</dbReference>
<dbReference type="GO" id="GO:0016597">
    <property type="term" value="F:amino acid binding"/>
    <property type="evidence" value="ECO:0007669"/>
    <property type="project" value="InterPro"/>
</dbReference>
<dbReference type="GO" id="GO:0004070">
    <property type="term" value="F:aspartate carbamoyltransferase activity"/>
    <property type="evidence" value="ECO:0007669"/>
    <property type="project" value="UniProtKB-UniRule"/>
</dbReference>
<dbReference type="GO" id="GO:0006207">
    <property type="term" value="P:'de novo' pyrimidine nucleobase biosynthetic process"/>
    <property type="evidence" value="ECO:0007669"/>
    <property type="project" value="InterPro"/>
</dbReference>
<dbReference type="GO" id="GO:0044205">
    <property type="term" value="P:'de novo' UMP biosynthetic process"/>
    <property type="evidence" value="ECO:0007669"/>
    <property type="project" value="UniProtKB-UniRule"/>
</dbReference>
<dbReference type="GO" id="GO:0006520">
    <property type="term" value="P:amino acid metabolic process"/>
    <property type="evidence" value="ECO:0007669"/>
    <property type="project" value="InterPro"/>
</dbReference>
<dbReference type="FunFam" id="3.40.50.1370:FF:000001">
    <property type="entry name" value="Aspartate carbamoyltransferase"/>
    <property type="match status" value="1"/>
</dbReference>
<dbReference type="FunFam" id="3.40.50.1370:FF:000002">
    <property type="entry name" value="Aspartate carbamoyltransferase 2"/>
    <property type="match status" value="1"/>
</dbReference>
<dbReference type="Gene3D" id="3.40.50.1370">
    <property type="entry name" value="Aspartate/ornithine carbamoyltransferase"/>
    <property type="match status" value="2"/>
</dbReference>
<dbReference type="HAMAP" id="MF_00001">
    <property type="entry name" value="Asp_carb_tr"/>
    <property type="match status" value="1"/>
</dbReference>
<dbReference type="InterPro" id="IPR006132">
    <property type="entry name" value="Asp/Orn_carbamoyltranf_P-bd"/>
</dbReference>
<dbReference type="InterPro" id="IPR006130">
    <property type="entry name" value="Asp/Orn_carbamoylTrfase"/>
</dbReference>
<dbReference type="InterPro" id="IPR036901">
    <property type="entry name" value="Asp/Orn_carbamoylTrfase_sf"/>
</dbReference>
<dbReference type="InterPro" id="IPR002082">
    <property type="entry name" value="Asp_carbamoyltransf"/>
</dbReference>
<dbReference type="InterPro" id="IPR006131">
    <property type="entry name" value="Asp_carbamoyltransf_Asp/Orn-bd"/>
</dbReference>
<dbReference type="NCBIfam" id="TIGR00670">
    <property type="entry name" value="asp_carb_tr"/>
    <property type="match status" value="1"/>
</dbReference>
<dbReference type="NCBIfam" id="NF002032">
    <property type="entry name" value="PRK00856.1"/>
    <property type="match status" value="1"/>
</dbReference>
<dbReference type="PANTHER" id="PTHR45753:SF6">
    <property type="entry name" value="ASPARTATE CARBAMOYLTRANSFERASE"/>
    <property type="match status" value="1"/>
</dbReference>
<dbReference type="PANTHER" id="PTHR45753">
    <property type="entry name" value="ORNITHINE CARBAMOYLTRANSFERASE, MITOCHONDRIAL"/>
    <property type="match status" value="1"/>
</dbReference>
<dbReference type="Pfam" id="PF00185">
    <property type="entry name" value="OTCace"/>
    <property type="match status" value="1"/>
</dbReference>
<dbReference type="Pfam" id="PF02729">
    <property type="entry name" value="OTCace_N"/>
    <property type="match status" value="1"/>
</dbReference>
<dbReference type="PRINTS" id="PR00100">
    <property type="entry name" value="AOTCASE"/>
</dbReference>
<dbReference type="PRINTS" id="PR00101">
    <property type="entry name" value="ATCASE"/>
</dbReference>
<dbReference type="SUPFAM" id="SSF53671">
    <property type="entry name" value="Aspartate/ornithine carbamoyltransferase"/>
    <property type="match status" value="1"/>
</dbReference>
<dbReference type="PROSITE" id="PS00097">
    <property type="entry name" value="CARBAMOYLTRANSFERASE"/>
    <property type="match status" value="1"/>
</dbReference>